<protein>
    <recommendedName>
        <fullName evidence="1">ATP synthase subunit b</fullName>
    </recommendedName>
    <alternativeName>
        <fullName evidence="1">ATP synthase F(0) sector subunit b</fullName>
    </alternativeName>
    <alternativeName>
        <fullName evidence="1">ATPase subunit I</fullName>
    </alternativeName>
    <alternativeName>
        <fullName evidence="1">F-type ATPase subunit b</fullName>
        <shortName evidence="1">F-ATPase subunit b</shortName>
    </alternativeName>
</protein>
<proteinExistence type="inferred from homology"/>
<gene>
    <name evidence="1" type="primary">atpF</name>
    <name type="ordered locus">NMCC_0280</name>
</gene>
<name>ATPF_NEIM0</name>
<evidence type="ECO:0000255" key="1">
    <source>
        <dbReference type="HAMAP-Rule" id="MF_01398"/>
    </source>
</evidence>
<accession>A9M119</accession>
<feature type="chain" id="PRO_0000368623" description="ATP synthase subunit b">
    <location>
        <begin position="1"/>
        <end position="156"/>
    </location>
</feature>
<feature type="transmembrane region" description="Helical" evidence="1">
    <location>
        <begin position="7"/>
        <end position="27"/>
    </location>
</feature>
<reference key="1">
    <citation type="journal article" date="2008" name="Genomics">
        <title>Characterization of ST-4821 complex, a unique Neisseria meningitidis clone.</title>
        <authorList>
            <person name="Peng J."/>
            <person name="Yang L."/>
            <person name="Yang F."/>
            <person name="Yang J."/>
            <person name="Yan Y."/>
            <person name="Nie H."/>
            <person name="Zhang X."/>
            <person name="Xiong Z."/>
            <person name="Jiang Y."/>
            <person name="Cheng F."/>
            <person name="Xu X."/>
            <person name="Chen S."/>
            <person name="Sun L."/>
            <person name="Li W."/>
            <person name="Shen Y."/>
            <person name="Shao Z."/>
            <person name="Liang X."/>
            <person name="Xu J."/>
            <person name="Jin Q."/>
        </authorList>
    </citation>
    <scope>NUCLEOTIDE SEQUENCE [LARGE SCALE GENOMIC DNA]</scope>
    <source>
        <strain>053442</strain>
    </source>
</reference>
<dbReference type="EMBL" id="CP000381">
    <property type="protein sequence ID" value="ABX72488.1"/>
    <property type="molecule type" value="Genomic_DNA"/>
</dbReference>
<dbReference type="RefSeq" id="WP_002214796.1">
    <property type="nucleotide sequence ID" value="NC_010120.1"/>
</dbReference>
<dbReference type="SMR" id="A9M119"/>
<dbReference type="KEGG" id="nmn:NMCC_0280"/>
<dbReference type="HOGENOM" id="CLU_079215_4_5_4"/>
<dbReference type="Proteomes" id="UP000001177">
    <property type="component" value="Chromosome"/>
</dbReference>
<dbReference type="GO" id="GO:0005886">
    <property type="term" value="C:plasma membrane"/>
    <property type="evidence" value="ECO:0007669"/>
    <property type="project" value="UniProtKB-SubCell"/>
</dbReference>
<dbReference type="GO" id="GO:0045259">
    <property type="term" value="C:proton-transporting ATP synthase complex"/>
    <property type="evidence" value="ECO:0007669"/>
    <property type="project" value="UniProtKB-KW"/>
</dbReference>
<dbReference type="GO" id="GO:0046933">
    <property type="term" value="F:proton-transporting ATP synthase activity, rotational mechanism"/>
    <property type="evidence" value="ECO:0007669"/>
    <property type="project" value="UniProtKB-UniRule"/>
</dbReference>
<dbReference type="GO" id="GO:0046961">
    <property type="term" value="F:proton-transporting ATPase activity, rotational mechanism"/>
    <property type="evidence" value="ECO:0007669"/>
    <property type="project" value="TreeGrafter"/>
</dbReference>
<dbReference type="CDD" id="cd06503">
    <property type="entry name" value="ATP-synt_Fo_b"/>
    <property type="match status" value="1"/>
</dbReference>
<dbReference type="FunFam" id="1.20.5.620:FF:000001">
    <property type="entry name" value="ATP synthase subunit b"/>
    <property type="match status" value="1"/>
</dbReference>
<dbReference type="Gene3D" id="1.20.5.620">
    <property type="entry name" value="F1F0 ATP synthase subunit B, membrane domain"/>
    <property type="match status" value="1"/>
</dbReference>
<dbReference type="HAMAP" id="MF_01398">
    <property type="entry name" value="ATP_synth_b_bprime"/>
    <property type="match status" value="1"/>
</dbReference>
<dbReference type="InterPro" id="IPR028987">
    <property type="entry name" value="ATP_synth_B-like_membr_sf"/>
</dbReference>
<dbReference type="InterPro" id="IPR002146">
    <property type="entry name" value="ATP_synth_b/b'su_bac/chlpt"/>
</dbReference>
<dbReference type="InterPro" id="IPR005864">
    <property type="entry name" value="ATP_synth_F0_bsu_bac"/>
</dbReference>
<dbReference type="InterPro" id="IPR050059">
    <property type="entry name" value="ATP_synthase_B_chain"/>
</dbReference>
<dbReference type="NCBIfam" id="TIGR01144">
    <property type="entry name" value="ATP_synt_b"/>
    <property type="match status" value="1"/>
</dbReference>
<dbReference type="NCBIfam" id="NF004411">
    <property type="entry name" value="PRK05759.1-2"/>
    <property type="match status" value="1"/>
</dbReference>
<dbReference type="PANTHER" id="PTHR33445:SF1">
    <property type="entry name" value="ATP SYNTHASE SUBUNIT B"/>
    <property type="match status" value="1"/>
</dbReference>
<dbReference type="PANTHER" id="PTHR33445">
    <property type="entry name" value="ATP SYNTHASE SUBUNIT B', CHLOROPLASTIC"/>
    <property type="match status" value="1"/>
</dbReference>
<dbReference type="Pfam" id="PF00430">
    <property type="entry name" value="ATP-synt_B"/>
    <property type="match status" value="1"/>
</dbReference>
<dbReference type="SUPFAM" id="SSF81573">
    <property type="entry name" value="F1F0 ATP synthase subunit B, membrane domain"/>
    <property type="match status" value="1"/>
</dbReference>
<organism>
    <name type="scientific">Neisseria meningitidis serogroup C (strain 053442)</name>
    <dbReference type="NCBI Taxonomy" id="374833"/>
    <lineage>
        <taxon>Bacteria</taxon>
        <taxon>Pseudomonadati</taxon>
        <taxon>Pseudomonadota</taxon>
        <taxon>Betaproteobacteria</taxon>
        <taxon>Neisseriales</taxon>
        <taxon>Neisseriaceae</taxon>
        <taxon>Neisseria</taxon>
    </lineage>
</organism>
<sequence length="156" mass="17139">MNINATLFAQIIVFFGLVWFTMKFVWPPIAKALDERAAKVAEGLAAAERGKSDFEQAEKKVAELLAEGRNQVSEMVANAEKRAAKIVEEAKEQASSEAARIAAQAKADVEQELFRARESLREQVAVLAVKGAESILRSEVDASKHAKLLDTLKQEL</sequence>
<comment type="function">
    <text evidence="1">F(1)F(0) ATP synthase produces ATP from ADP in the presence of a proton or sodium gradient. F-type ATPases consist of two structural domains, F(1) containing the extramembraneous catalytic core and F(0) containing the membrane proton channel, linked together by a central stalk and a peripheral stalk. During catalysis, ATP synthesis in the catalytic domain of F(1) is coupled via a rotary mechanism of the central stalk subunits to proton translocation.</text>
</comment>
<comment type="function">
    <text evidence="1">Component of the F(0) channel, it forms part of the peripheral stalk, linking F(1) to F(0).</text>
</comment>
<comment type="subunit">
    <text evidence="1">F-type ATPases have 2 components, F(1) - the catalytic core - and F(0) - the membrane proton channel. F(1) has five subunits: alpha(3), beta(3), gamma(1), delta(1), epsilon(1). F(0) has three main subunits: a(1), b(2) and c(10-14). The alpha and beta chains form an alternating ring which encloses part of the gamma chain. F(1) is attached to F(0) by a central stalk formed by the gamma and epsilon chains, while a peripheral stalk is formed by the delta and b chains.</text>
</comment>
<comment type="subcellular location">
    <subcellularLocation>
        <location evidence="1">Cell inner membrane</location>
        <topology evidence="1">Single-pass membrane protein</topology>
    </subcellularLocation>
</comment>
<comment type="similarity">
    <text evidence="1">Belongs to the ATPase B chain family.</text>
</comment>
<keyword id="KW-0066">ATP synthesis</keyword>
<keyword id="KW-0997">Cell inner membrane</keyword>
<keyword id="KW-1003">Cell membrane</keyword>
<keyword id="KW-0138">CF(0)</keyword>
<keyword id="KW-0375">Hydrogen ion transport</keyword>
<keyword id="KW-0406">Ion transport</keyword>
<keyword id="KW-0472">Membrane</keyword>
<keyword id="KW-0812">Transmembrane</keyword>
<keyword id="KW-1133">Transmembrane helix</keyword>
<keyword id="KW-0813">Transport</keyword>